<proteinExistence type="inferred from homology"/>
<keyword id="KW-1003">Cell membrane</keyword>
<keyword id="KW-0210">Decarboxylase</keyword>
<keyword id="KW-0444">Lipid biosynthesis</keyword>
<keyword id="KW-0443">Lipid metabolism</keyword>
<keyword id="KW-0456">Lyase</keyword>
<keyword id="KW-0472">Membrane</keyword>
<keyword id="KW-0594">Phospholipid biosynthesis</keyword>
<keyword id="KW-1208">Phospholipid metabolism</keyword>
<keyword id="KW-0670">Pyruvate</keyword>
<keyword id="KW-1185">Reference proteome</keyword>
<keyword id="KW-0865">Zymogen</keyword>
<feature type="chain" id="PRO_0000029665" description="Phosphatidylserine decarboxylase beta chain" evidence="1">
    <location>
        <begin position="1"/>
        <end position="235"/>
    </location>
</feature>
<feature type="chain" id="PRO_0000029666" description="Phosphatidylserine decarboxylase alpha chain" evidence="1">
    <location>
        <begin position="236"/>
        <end position="267"/>
    </location>
</feature>
<feature type="active site" description="Charge relay system; for autoendoproteolytic cleavage activity" evidence="1">
    <location>
        <position position="78"/>
    </location>
</feature>
<feature type="active site" description="Charge relay system; for autoendoproteolytic cleavage activity" evidence="1">
    <location>
        <position position="132"/>
    </location>
</feature>
<feature type="active site" description="Charge relay system; for autoendoproteolytic cleavage activity" evidence="1">
    <location>
        <position position="236"/>
    </location>
</feature>
<feature type="active site" description="Schiff-base intermediate with substrate; via pyruvic acid; for decarboxylase activity" evidence="1">
    <location>
        <position position="236"/>
    </location>
</feature>
<feature type="site" description="Cleavage (non-hydrolytic); by autocatalysis" evidence="1">
    <location>
        <begin position="235"/>
        <end position="236"/>
    </location>
</feature>
<feature type="modified residue" description="Pyruvic acid (Ser); by autocatalysis" evidence="1">
    <location>
        <position position="236"/>
    </location>
</feature>
<accession>O25911</accession>
<gene>
    <name evidence="1" type="primary">psd</name>
    <name type="ordered locus">HP_1357</name>
</gene>
<protein>
    <recommendedName>
        <fullName evidence="1">Phosphatidylserine decarboxylase proenzyme</fullName>
        <ecNumber evidence="1">4.1.1.65</ecNumber>
    </recommendedName>
    <component>
        <recommendedName>
            <fullName evidence="1">Phosphatidylserine decarboxylase alpha chain</fullName>
        </recommendedName>
    </component>
    <component>
        <recommendedName>
            <fullName evidence="1">Phosphatidylserine decarboxylase beta chain</fullName>
        </recommendedName>
    </component>
</protein>
<reference key="1">
    <citation type="journal article" date="1997" name="Nature">
        <title>The complete genome sequence of the gastric pathogen Helicobacter pylori.</title>
        <authorList>
            <person name="Tomb J.-F."/>
            <person name="White O."/>
            <person name="Kerlavage A.R."/>
            <person name="Clayton R.A."/>
            <person name="Sutton G.G."/>
            <person name="Fleischmann R.D."/>
            <person name="Ketchum K.A."/>
            <person name="Klenk H.-P."/>
            <person name="Gill S.R."/>
            <person name="Dougherty B.A."/>
            <person name="Nelson K.E."/>
            <person name="Quackenbush J."/>
            <person name="Zhou L."/>
            <person name="Kirkness E.F."/>
            <person name="Peterson S.N."/>
            <person name="Loftus B.J."/>
            <person name="Richardson D.L."/>
            <person name="Dodson R.J."/>
            <person name="Khalak H.G."/>
            <person name="Glodek A."/>
            <person name="McKenney K."/>
            <person name="FitzGerald L.M."/>
            <person name="Lee N."/>
            <person name="Adams M.D."/>
            <person name="Hickey E.K."/>
            <person name="Berg D.E."/>
            <person name="Gocayne J.D."/>
            <person name="Utterback T.R."/>
            <person name="Peterson J.D."/>
            <person name="Kelley J.M."/>
            <person name="Cotton M.D."/>
            <person name="Weidman J.F."/>
            <person name="Fujii C."/>
            <person name="Bowman C."/>
            <person name="Watthey L."/>
            <person name="Wallin E."/>
            <person name="Hayes W.S."/>
            <person name="Borodovsky M."/>
            <person name="Karp P.D."/>
            <person name="Smith H.O."/>
            <person name="Fraser C.M."/>
            <person name="Venter J.C."/>
        </authorList>
    </citation>
    <scope>NUCLEOTIDE SEQUENCE [LARGE SCALE GENOMIC DNA]</scope>
    <source>
        <strain>ATCC 700392 / 26695</strain>
    </source>
</reference>
<organism>
    <name type="scientific">Helicobacter pylori (strain ATCC 700392 / 26695)</name>
    <name type="common">Campylobacter pylori</name>
    <dbReference type="NCBI Taxonomy" id="85962"/>
    <lineage>
        <taxon>Bacteria</taxon>
        <taxon>Pseudomonadati</taxon>
        <taxon>Campylobacterota</taxon>
        <taxon>Epsilonproteobacteria</taxon>
        <taxon>Campylobacterales</taxon>
        <taxon>Helicobacteraceae</taxon>
        <taxon>Helicobacter</taxon>
    </lineage>
</organism>
<dbReference type="EC" id="4.1.1.65" evidence="1"/>
<dbReference type="EMBL" id="AE000511">
    <property type="protein sequence ID" value="AAD08399.1"/>
    <property type="molecule type" value="Genomic_DNA"/>
</dbReference>
<dbReference type="PIR" id="E64689">
    <property type="entry name" value="E64689"/>
</dbReference>
<dbReference type="RefSeq" id="NP_208149.1">
    <property type="nucleotide sequence ID" value="NC_000915.1"/>
</dbReference>
<dbReference type="RefSeq" id="WP_000226149.1">
    <property type="nucleotide sequence ID" value="NC_018939.1"/>
</dbReference>
<dbReference type="SMR" id="O25911"/>
<dbReference type="DIP" id="DIP-3497N"/>
<dbReference type="FunCoup" id="O25911">
    <property type="interactions" value="203"/>
</dbReference>
<dbReference type="IntAct" id="O25911">
    <property type="interactions" value="1"/>
</dbReference>
<dbReference type="MINT" id="O25911"/>
<dbReference type="STRING" id="85962.HP_1357"/>
<dbReference type="PaxDb" id="85962-C694_07005"/>
<dbReference type="EnsemblBacteria" id="AAD08399">
    <property type="protein sequence ID" value="AAD08399"/>
    <property type="gene ID" value="HP_1357"/>
</dbReference>
<dbReference type="KEGG" id="heo:C694_07005"/>
<dbReference type="KEGG" id="hpy:HP_1357"/>
<dbReference type="PATRIC" id="fig|85962.47.peg.1453"/>
<dbReference type="eggNOG" id="COG0688">
    <property type="taxonomic scope" value="Bacteria"/>
</dbReference>
<dbReference type="InParanoid" id="O25911"/>
<dbReference type="OrthoDB" id="9802030at2"/>
<dbReference type="PhylomeDB" id="O25911"/>
<dbReference type="UniPathway" id="UPA00558">
    <property type="reaction ID" value="UER00616"/>
</dbReference>
<dbReference type="Proteomes" id="UP000000429">
    <property type="component" value="Chromosome"/>
</dbReference>
<dbReference type="GO" id="GO:0005886">
    <property type="term" value="C:plasma membrane"/>
    <property type="evidence" value="ECO:0007669"/>
    <property type="project" value="UniProtKB-SubCell"/>
</dbReference>
<dbReference type="GO" id="GO:0004609">
    <property type="term" value="F:phosphatidylserine decarboxylase activity"/>
    <property type="evidence" value="ECO:0000318"/>
    <property type="project" value="GO_Central"/>
</dbReference>
<dbReference type="GO" id="GO:0006646">
    <property type="term" value="P:phosphatidylethanolamine biosynthetic process"/>
    <property type="evidence" value="ECO:0000318"/>
    <property type="project" value="GO_Central"/>
</dbReference>
<dbReference type="HAMAP" id="MF_00662">
    <property type="entry name" value="PS_decarb_PSD_B_type1"/>
    <property type="match status" value="1"/>
</dbReference>
<dbReference type="InterPro" id="IPR003817">
    <property type="entry name" value="PS_Dcarbxylase"/>
</dbReference>
<dbReference type="InterPro" id="IPR033177">
    <property type="entry name" value="PSD-B"/>
</dbReference>
<dbReference type="InterPro" id="IPR033178">
    <property type="entry name" value="PSD_type1_pro"/>
</dbReference>
<dbReference type="NCBIfam" id="NF003038">
    <property type="entry name" value="PRK03934.1"/>
    <property type="match status" value="1"/>
</dbReference>
<dbReference type="NCBIfam" id="TIGR00163">
    <property type="entry name" value="PS_decarb"/>
    <property type="match status" value="1"/>
</dbReference>
<dbReference type="PANTHER" id="PTHR10067">
    <property type="entry name" value="PHOSPHATIDYLSERINE DECARBOXYLASE"/>
    <property type="match status" value="1"/>
</dbReference>
<dbReference type="PANTHER" id="PTHR10067:SF6">
    <property type="entry name" value="PHOSPHATIDYLSERINE DECARBOXYLASE PROENZYME, MITOCHONDRIAL"/>
    <property type="match status" value="1"/>
</dbReference>
<dbReference type="Pfam" id="PF02666">
    <property type="entry name" value="PS_Dcarbxylase"/>
    <property type="match status" value="1"/>
</dbReference>
<evidence type="ECO:0000255" key="1">
    <source>
        <dbReference type="HAMAP-Rule" id="MF_00662"/>
    </source>
</evidence>
<comment type="function">
    <text evidence="1">Catalyzes the formation of phosphatidylethanolamine (PtdEtn) from phosphatidylserine (PtdSer).</text>
</comment>
<comment type="catalytic activity">
    <reaction evidence="1">
        <text>a 1,2-diacyl-sn-glycero-3-phospho-L-serine + H(+) = a 1,2-diacyl-sn-glycero-3-phosphoethanolamine + CO2</text>
        <dbReference type="Rhea" id="RHEA:20828"/>
        <dbReference type="ChEBI" id="CHEBI:15378"/>
        <dbReference type="ChEBI" id="CHEBI:16526"/>
        <dbReference type="ChEBI" id="CHEBI:57262"/>
        <dbReference type="ChEBI" id="CHEBI:64612"/>
        <dbReference type="EC" id="4.1.1.65"/>
    </reaction>
</comment>
<comment type="cofactor">
    <cofactor evidence="1">
        <name>pyruvate</name>
        <dbReference type="ChEBI" id="CHEBI:15361"/>
    </cofactor>
    <text evidence="1">Binds 1 pyruvoyl group covalently per subunit.</text>
</comment>
<comment type="pathway">
    <text evidence="1">Phospholipid metabolism; phosphatidylethanolamine biosynthesis; phosphatidylethanolamine from CDP-diacylglycerol: step 2/2.</text>
</comment>
<comment type="subunit">
    <text evidence="1">Heterodimer of a large membrane-associated beta subunit and a small pyruvoyl-containing alpha subunit.</text>
</comment>
<comment type="subcellular location">
    <subcellularLocation>
        <location evidence="1">Cell membrane</location>
        <topology evidence="1">Peripheral membrane protein</topology>
    </subcellularLocation>
</comment>
<comment type="PTM">
    <text evidence="1">Is synthesized initially as an inactive proenzyme. Formation of the active enzyme involves a self-maturation process in which the active site pyruvoyl group is generated from an internal serine residue via an autocatalytic post-translational modification. Two non-identical subunits are generated from the proenzyme in this reaction, and the pyruvate is formed at the N-terminus of the alpha chain, which is derived from the carboxyl end of the proenzyme. The autoendoproteolytic cleavage occurs by a canonical serine protease mechanism, in which the side chain hydroxyl group of the serine supplies its oxygen atom to form the C-terminus of the beta chain, while the remainder of the serine residue undergoes an oxidative deamination to produce ammonia and the pyruvoyl prosthetic group on the alpha chain. During this reaction, the Ser that is part of the protease active site of the proenzyme becomes the pyruvoyl prosthetic group, which constitutes an essential element of the active site of the mature decarboxylase.</text>
</comment>
<comment type="similarity">
    <text evidence="1">Belongs to the phosphatidylserine decarboxylase family. PSD-B subfamily. Prokaryotic type I sub-subfamily.</text>
</comment>
<sequence>MVALSNALSRVFGSLAGYKFPSFIQKGINALYVKIFKIDLSEFEPLENYRSLNALFTRSLKKERPFDKSPNICIAPCDALITECAFLDNDSALQIKGMPYKAHELVGEINPLSPSFFYANFYLSPKDYHHYHAPCDLEILEARYFAGKLLPVNKPSLHKNNNLFVGNERVTLVAKDIQGNRLYFVAVGALNVGKMRFNFDKNIQTNAKARFTQTYSYNPPIKVKKGDNLGNFEMGSTIVLFIQNTAFKDLKEKNVKFGESIGEFHAN</sequence>
<name>PSD_HELPY</name>